<sequence>MAVKASGRFVPPSAFAAGTGKMFTGAYAWNAPREAVGRERPLTRDEMRQMQGVLSTINRLPYFLRSLFTSRYDYIRRNKSPVHGFYFLTSTFQRRLWPRIERVNQRHEMNTDASLLFLAERDHYARLPGMNDKELKKFAARISSQLFMMYEELSDAWVDAHGEKESLFTDEAQAHLYGHVAGAARAFNISPLYWKKYRKGQMTTRQAYSAIARLFNDEWWTHQLKGQRMRWHETLLIAVGEVNKDRSPYASKHAIRDVRARRQANLEFLKSCDLENRETGERIDLISKVMGSISNPEIRRMELMNTIAGIERYAAAEGDVGMFITLTAPSKYHPTRQVGKGESKTVQLNHGWNDEAFNPKDAQRYLCHIWSLMRTAFKDNDLQVYGLRVVEPHHDGTPHWHMMLFCNPRQRNQIIEIMRRYALKEDGDERGAARNRFQAKHLNQGGAAGYIAKYISKNIDGYALDGQLDNDTGRPLKDTAAAVTAWASTWRIPQFKTVGLPTMGAYRELRKLPRGVSIADEFDERVEAARAAADSGDFALYISAQGGANVPRDCQTVRVARSPSDEVNEYEEEVERVVGIYAPHLGARHIHITRTTDWRIVPKVPVVEPLTLKSGIAAPRSPVNNCGKLTGGDTSLPAPTPSEHAAAVLNLVDDGVIEWNEPEVVRALRGALKYDMRTPNRQQRNGSPLKPHEIAPSARLTRSERLQITRIRVDLAQNGIRPQRWELEALARGATVNYDGKKFTYPVADEWPGFSTVMEWT</sequence>
<organism>
    <name type="scientific">Escherichia phage P2</name>
    <name type="common">Bacteriophage P2</name>
    <dbReference type="NCBI Taxonomy" id="2905681"/>
    <lineage>
        <taxon>Viruses</taxon>
        <taxon>Duplodnaviria</taxon>
        <taxon>Heunggongvirae</taxon>
        <taxon>Uroviricota</taxon>
        <taxon>Caudoviricetes</taxon>
        <taxon>Peduoviridae</taxon>
        <taxon>Peduovirus</taxon>
        <taxon>Peduovirus P2</taxon>
    </lineage>
</organism>
<name>VPA_BPP2</name>
<proteinExistence type="evidence at transcript level"/>
<gene>
    <name type="primary">A</name>
</gene>
<accession>Q06419</accession>
<feature type="chain" id="PRO_0000165247" description="Replication gene A protein">
    <location>
        <begin position="1"/>
        <end position="761"/>
    </location>
</feature>
<feature type="active site" description="O-(5'-phospho-DNA)-tyrosine intermediate" evidence="1">
    <location>
        <position position="450"/>
    </location>
</feature>
<feature type="active site" description="O-(5'-phospho-DNA)-tyrosine intermediate" evidence="1">
    <location>
        <position position="454"/>
    </location>
</feature>
<organismHost>
    <name type="scientific">Enterobacteriaceae</name>
    <dbReference type="NCBI Taxonomy" id="543"/>
</organismHost>
<reference key="1">
    <citation type="journal article" date="1993" name="J. Mol. Biol.">
        <title>Studies of bacteriophage P2 DNA replication. The DNA sequence of the cis-acting gene A and ori region and construction of a P2 mini-chromosome.</title>
        <authorList>
            <person name="Liu Y."/>
            <person name="Saha S."/>
            <person name="Haggaard-Ljungquist E."/>
        </authorList>
    </citation>
    <scope>NUCLEOTIDE SEQUENCE [GENOMIC DNA]</scope>
</reference>
<reference key="2">
    <citation type="submission" date="1998-05" db="EMBL/GenBank/DDBJ databases">
        <title>The complete genome of bacteriophage P2.</title>
        <authorList>
            <person name="Christie G.E."/>
            <person name="Haggard-Ljungquist E."/>
            <person name="Calendar R."/>
        </authorList>
    </citation>
    <scope>SEQUENCE REVISION TO 34 AND 234</scope>
</reference>
<dbReference type="EC" id="3.1.-.-"/>
<dbReference type="EMBL" id="AF063097">
    <property type="protein sequence ID" value="AAD03306.1"/>
    <property type="molecule type" value="Genomic_DNA"/>
</dbReference>
<dbReference type="PIR" id="S33835">
    <property type="entry name" value="S33835"/>
</dbReference>
<dbReference type="RefSeq" id="NP_046795.1">
    <property type="nucleotide sequence ID" value="NC_001895.1"/>
</dbReference>
<dbReference type="GeneID" id="77440829"/>
<dbReference type="KEGG" id="vg:77440829"/>
<dbReference type="Proteomes" id="UP000009092">
    <property type="component" value="Genome"/>
</dbReference>
<dbReference type="GO" id="GO:0004519">
    <property type="term" value="F:endonuclease activity"/>
    <property type="evidence" value="ECO:0007669"/>
    <property type="project" value="UniProtKB-KW"/>
</dbReference>
<dbReference type="GO" id="GO:0006260">
    <property type="term" value="P:DNA replication"/>
    <property type="evidence" value="ECO:0007669"/>
    <property type="project" value="UniProtKB-KW"/>
</dbReference>
<dbReference type="GO" id="GO:0039693">
    <property type="term" value="P:viral DNA genome replication"/>
    <property type="evidence" value="ECO:0007669"/>
    <property type="project" value="UniProtKB-KW"/>
</dbReference>
<dbReference type="InterPro" id="IPR008766">
    <property type="entry name" value="Replication_gene_A-like"/>
</dbReference>
<dbReference type="Pfam" id="PF05840">
    <property type="entry name" value="Phage_GPA"/>
    <property type="match status" value="1"/>
</dbReference>
<evidence type="ECO:0000250" key="1"/>
<evidence type="ECO:0000305" key="2"/>
<keyword id="KW-0190">Covalent protein-DNA linkage</keyword>
<keyword id="KW-0235">DNA replication</keyword>
<keyword id="KW-0244">Early protein</keyword>
<keyword id="KW-0255">Endonuclease</keyword>
<keyword id="KW-0378">Hydrolase</keyword>
<keyword id="KW-0540">Nuclease</keyword>
<keyword id="KW-1185">Reference proteome</keyword>
<keyword id="KW-1194">Viral DNA replication</keyword>
<protein>
    <recommendedName>
        <fullName>Replication gene A protein</fullName>
        <ecNumber>3.1.-.-</ecNumber>
    </recommendedName>
    <alternativeName>
        <fullName>GpA</fullName>
    </alternativeName>
</protein>
<comment type="function">
    <text>Endonuclease which induces a single-strand cut at or near ori. May act by forming a covalent link to the 5'side of the nick.</text>
</comment>
<comment type="developmental stage">
    <text>Required continuously throughout the infection cycle.</text>
</comment>
<comment type="similarity">
    <text evidence="2">Belongs to the phage GPA family.</text>
</comment>